<protein>
    <recommendedName>
        <fullName>Putative cytochrome P450 126</fullName>
        <ecNumber>1.14.-.-</ecNumber>
    </recommendedName>
</protein>
<gene>
    <name type="primary">cyp126</name>
    <name type="ordered locus">MT0802</name>
</gene>
<proteinExistence type="inferred from homology"/>
<sequence length="414" mass="45954">MTTAAGLSGIDLTDLDNFADGFPHHLFAIHRREAPVYWHRPTEHTPDGEGFWSVATYAETLEVLRDPVTYSSVTGGQRRFGGTVLQDLPVAGQVLNMMDDPRHTRIRRLVSSGLTPRMIRRVEDDLRRRARGLLDGVEPGAPFDFVVEIAAELPMQMICILLGVPETDRHWLFEAVEPGFDFRGSRRATMPRLNVEDAGSRLYTYALELIAGKRAEPADDMLSVVANATIDDPDAPALSDAELYLFFHLLFSAGAETTRNSIAGGLLALAENPDQLQTLRSDFELLPTAIEEIVRWTSPSPSKRRTASRAVSLGGQPIEAGQKVVVWEGSANRDPSVFDRADEFDITRKPNPHLGFGQGVHYCLGANLARLELRVLFEELLSRFGSVRVVEPAEWTRSNRHTGIRHLVVELRGG</sequence>
<accession>P9WPN8</accession>
<accession>L0T4P8</accession>
<accession>P63711</accession>
<accession>P77903</accession>
<feature type="chain" id="PRO_0000426919" description="Putative cytochrome P450 126">
    <location>
        <begin position="1"/>
        <end position="414"/>
    </location>
</feature>
<feature type="binding site" description="axial binding residue" evidence="1">
    <location>
        <position position="363"/>
    </location>
    <ligand>
        <name>heme</name>
        <dbReference type="ChEBI" id="CHEBI:30413"/>
    </ligand>
    <ligandPart>
        <name>Fe</name>
        <dbReference type="ChEBI" id="CHEBI:18248"/>
    </ligandPart>
</feature>
<evidence type="ECO:0000250" key="1"/>
<evidence type="ECO:0000305" key="2"/>
<comment type="cofactor">
    <cofactor evidence="1">
        <name>heme</name>
        <dbReference type="ChEBI" id="CHEBI:30413"/>
    </cofactor>
</comment>
<comment type="similarity">
    <text evidence="2">Belongs to the cytochrome P450 family.</text>
</comment>
<name>CP126_MYCTO</name>
<organism>
    <name type="scientific">Mycobacterium tuberculosis (strain CDC 1551 / Oshkosh)</name>
    <dbReference type="NCBI Taxonomy" id="83331"/>
    <lineage>
        <taxon>Bacteria</taxon>
        <taxon>Bacillati</taxon>
        <taxon>Actinomycetota</taxon>
        <taxon>Actinomycetes</taxon>
        <taxon>Mycobacteriales</taxon>
        <taxon>Mycobacteriaceae</taxon>
        <taxon>Mycobacterium</taxon>
        <taxon>Mycobacterium tuberculosis complex</taxon>
    </lineage>
</organism>
<dbReference type="EC" id="1.14.-.-"/>
<dbReference type="EMBL" id="AE000516">
    <property type="protein sequence ID" value="AAK45044.1"/>
    <property type="molecule type" value="Genomic_DNA"/>
</dbReference>
<dbReference type="PIR" id="E70708">
    <property type="entry name" value="E70708"/>
</dbReference>
<dbReference type="RefSeq" id="WP_003898584.1">
    <property type="nucleotide sequence ID" value="NZ_KK341227.1"/>
</dbReference>
<dbReference type="SMR" id="P9WPN8"/>
<dbReference type="KEGG" id="mtc:MT0802"/>
<dbReference type="PATRIC" id="fig|83331.31.peg.861"/>
<dbReference type="HOGENOM" id="CLU_033716_0_0_11"/>
<dbReference type="Proteomes" id="UP000001020">
    <property type="component" value="Chromosome"/>
</dbReference>
<dbReference type="GO" id="GO:0036199">
    <property type="term" value="F:cholest-4-en-3-one 26-monooxygenase activity"/>
    <property type="evidence" value="ECO:0007669"/>
    <property type="project" value="TreeGrafter"/>
</dbReference>
<dbReference type="GO" id="GO:0020037">
    <property type="term" value="F:heme binding"/>
    <property type="evidence" value="ECO:0007669"/>
    <property type="project" value="InterPro"/>
</dbReference>
<dbReference type="GO" id="GO:0005506">
    <property type="term" value="F:iron ion binding"/>
    <property type="evidence" value="ECO:0007669"/>
    <property type="project" value="InterPro"/>
</dbReference>
<dbReference type="GO" id="GO:0008395">
    <property type="term" value="F:steroid hydroxylase activity"/>
    <property type="evidence" value="ECO:0007669"/>
    <property type="project" value="TreeGrafter"/>
</dbReference>
<dbReference type="GO" id="GO:0006707">
    <property type="term" value="P:cholesterol catabolic process"/>
    <property type="evidence" value="ECO:0007669"/>
    <property type="project" value="TreeGrafter"/>
</dbReference>
<dbReference type="CDD" id="cd11033">
    <property type="entry name" value="CYP142-like"/>
    <property type="match status" value="1"/>
</dbReference>
<dbReference type="FunFam" id="1.10.630.10:FF:000018">
    <property type="entry name" value="Cytochrome P450 monooxygenase"/>
    <property type="match status" value="1"/>
</dbReference>
<dbReference type="Gene3D" id="1.10.630.10">
    <property type="entry name" value="Cytochrome P450"/>
    <property type="match status" value="1"/>
</dbReference>
<dbReference type="InterPro" id="IPR001128">
    <property type="entry name" value="Cyt_P450"/>
</dbReference>
<dbReference type="InterPro" id="IPR002397">
    <property type="entry name" value="Cyt_P450_B"/>
</dbReference>
<dbReference type="InterPro" id="IPR017972">
    <property type="entry name" value="Cyt_P450_CS"/>
</dbReference>
<dbReference type="InterPro" id="IPR036396">
    <property type="entry name" value="Cyt_P450_sf"/>
</dbReference>
<dbReference type="PANTHER" id="PTHR46696:SF4">
    <property type="entry name" value="BIOTIN BIOSYNTHESIS CYTOCHROME P450"/>
    <property type="match status" value="1"/>
</dbReference>
<dbReference type="PANTHER" id="PTHR46696">
    <property type="entry name" value="P450, PUTATIVE (EUROFUNG)-RELATED"/>
    <property type="match status" value="1"/>
</dbReference>
<dbReference type="Pfam" id="PF00067">
    <property type="entry name" value="p450"/>
    <property type="match status" value="1"/>
</dbReference>
<dbReference type="PRINTS" id="PR00359">
    <property type="entry name" value="BP450"/>
</dbReference>
<dbReference type="PRINTS" id="PR00385">
    <property type="entry name" value="P450"/>
</dbReference>
<dbReference type="SUPFAM" id="SSF48264">
    <property type="entry name" value="Cytochrome P450"/>
    <property type="match status" value="1"/>
</dbReference>
<dbReference type="PROSITE" id="PS00086">
    <property type="entry name" value="CYTOCHROME_P450"/>
    <property type="match status" value="1"/>
</dbReference>
<keyword id="KW-0349">Heme</keyword>
<keyword id="KW-0408">Iron</keyword>
<keyword id="KW-0479">Metal-binding</keyword>
<keyword id="KW-0503">Monooxygenase</keyword>
<keyword id="KW-0560">Oxidoreductase</keyword>
<keyword id="KW-1185">Reference proteome</keyword>
<reference key="1">
    <citation type="journal article" date="2002" name="J. Bacteriol.">
        <title>Whole-genome comparison of Mycobacterium tuberculosis clinical and laboratory strains.</title>
        <authorList>
            <person name="Fleischmann R.D."/>
            <person name="Alland D."/>
            <person name="Eisen J.A."/>
            <person name="Carpenter L."/>
            <person name="White O."/>
            <person name="Peterson J.D."/>
            <person name="DeBoy R.T."/>
            <person name="Dodson R.J."/>
            <person name="Gwinn M.L."/>
            <person name="Haft D.H."/>
            <person name="Hickey E.K."/>
            <person name="Kolonay J.F."/>
            <person name="Nelson W.C."/>
            <person name="Umayam L.A."/>
            <person name="Ermolaeva M.D."/>
            <person name="Salzberg S.L."/>
            <person name="Delcher A."/>
            <person name="Utterback T.R."/>
            <person name="Weidman J.F."/>
            <person name="Khouri H.M."/>
            <person name="Gill J."/>
            <person name="Mikula A."/>
            <person name="Bishai W."/>
            <person name="Jacobs W.R. Jr."/>
            <person name="Venter J.C."/>
            <person name="Fraser C.M."/>
        </authorList>
    </citation>
    <scope>NUCLEOTIDE SEQUENCE [LARGE SCALE GENOMIC DNA]</scope>
    <source>
        <strain>CDC 1551 / Oshkosh</strain>
    </source>
</reference>